<organism>
    <name type="scientific">Pan troglodytes</name>
    <name type="common">Chimpanzee</name>
    <dbReference type="NCBI Taxonomy" id="9598"/>
    <lineage>
        <taxon>Eukaryota</taxon>
        <taxon>Metazoa</taxon>
        <taxon>Chordata</taxon>
        <taxon>Craniata</taxon>
        <taxon>Vertebrata</taxon>
        <taxon>Euteleostomi</taxon>
        <taxon>Mammalia</taxon>
        <taxon>Eutheria</taxon>
        <taxon>Euarchontoglires</taxon>
        <taxon>Primates</taxon>
        <taxon>Haplorrhini</taxon>
        <taxon>Catarrhini</taxon>
        <taxon>Hominidae</taxon>
        <taxon>Pan</taxon>
    </lineage>
</organism>
<feature type="initiator methionine" description="Removed" evidence="2">
    <location>
        <position position="1"/>
    </location>
</feature>
<feature type="chain" id="PRO_0000295591" description="Hypoxanthine-guanine phosphoribosyltransferase">
    <location>
        <begin position="2"/>
        <end position="218"/>
    </location>
</feature>
<feature type="active site" description="Proton acceptor" evidence="1">
    <location>
        <position position="138"/>
    </location>
</feature>
<feature type="binding site" evidence="1">
    <location>
        <position position="69"/>
    </location>
    <ligand>
        <name>GMP</name>
        <dbReference type="ChEBI" id="CHEBI:58115"/>
    </ligand>
</feature>
<feature type="binding site" evidence="1">
    <location>
        <begin position="134"/>
        <end position="142"/>
    </location>
    <ligand>
        <name>GMP</name>
        <dbReference type="ChEBI" id="CHEBI:58115"/>
    </ligand>
</feature>
<feature type="binding site" evidence="1">
    <location>
        <position position="166"/>
    </location>
    <ligand>
        <name>GMP</name>
        <dbReference type="ChEBI" id="CHEBI:58115"/>
    </ligand>
</feature>
<feature type="binding site" evidence="1">
    <location>
        <begin position="186"/>
        <end position="188"/>
    </location>
    <ligand>
        <name>GMP</name>
        <dbReference type="ChEBI" id="CHEBI:58115"/>
    </ligand>
</feature>
<feature type="binding site" evidence="1">
    <location>
        <position position="194"/>
    </location>
    <ligand>
        <name>GMP</name>
        <dbReference type="ChEBI" id="CHEBI:58115"/>
    </ligand>
</feature>
<feature type="binding site" evidence="1">
    <location>
        <position position="194"/>
    </location>
    <ligand>
        <name>Mg(2+)</name>
        <dbReference type="ChEBI" id="CHEBI:18420"/>
    </ligand>
</feature>
<feature type="modified residue" description="N-acetylalanine" evidence="2">
    <location>
        <position position="2"/>
    </location>
</feature>
<feature type="modified residue" description="N6-acetyllysine" evidence="3">
    <location>
        <position position="103"/>
    </location>
</feature>
<feature type="modified residue" description="Phosphothreonine" evidence="4">
    <location>
        <position position="142"/>
    </location>
</feature>
<feature type="cross-link" description="Glycyl lysine isopeptide (Lys-Gly) (interchain with G-Cter in SUMO1); alternate" evidence="2">
    <location>
        <position position="115"/>
    </location>
</feature>
<feature type="cross-link" description="Glycyl lysine isopeptide (Lys-Gly) (interchain with G-Cter in SUMO2); alternate" evidence="2">
    <location>
        <position position="115"/>
    </location>
</feature>
<gene>
    <name type="primary">HPRT1</name>
</gene>
<protein>
    <recommendedName>
        <fullName>Hypoxanthine-guanine phosphoribosyltransferase</fullName>
        <shortName>HGPRT</shortName>
        <shortName>HGPRTase</shortName>
        <ecNumber evidence="2">2.4.2.8</ecNumber>
    </recommendedName>
</protein>
<keyword id="KW-0007">Acetylation</keyword>
<keyword id="KW-0963">Cytoplasm</keyword>
<keyword id="KW-0328">Glycosyltransferase</keyword>
<keyword id="KW-1017">Isopeptide bond</keyword>
<keyword id="KW-0460">Magnesium</keyword>
<keyword id="KW-0479">Metal-binding</keyword>
<keyword id="KW-0547">Nucleotide-binding</keyword>
<keyword id="KW-0597">Phosphoprotein</keyword>
<keyword id="KW-0660">Purine salvage</keyword>
<keyword id="KW-1185">Reference proteome</keyword>
<keyword id="KW-0808">Transferase</keyword>
<keyword id="KW-0832">Ubl conjugation</keyword>
<accession>A5A6I1</accession>
<proteinExistence type="evidence at transcript level"/>
<name>HPRT_PANTR</name>
<reference key="1">
    <citation type="journal article" date="2007" name="Gene">
        <title>Mapping of chimpanzee full-length cDNAs onto the human genome unveils large potential divergence of the transcriptome.</title>
        <authorList>
            <person name="Sakate R."/>
            <person name="Suto Y."/>
            <person name="Imanishi T."/>
            <person name="Tanoue T."/>
            <person name="Hida M."/>
            <person name="Hayasaka I."/>
            <person name="Kusuda J."/>
            <person name="Gojobori T."/>
            <person name="Hashimoto K."/>
            <person name="Hirai M."/>
        </authorList>
    </citation>
    <scope>NUCLEOTIDE SEQUENCE [MRNA]</scope>
    <source>
        <tissue>Cerebellum</tissue>
    </source>
</reference>
<evidence type="ECO:0000250" key="1"/>
<evidence type="ECO:0000250" key="2">
    <source>
        <dbReference type="UniProtKB" id="P00492"/>
    </source>
</evidence>
<evidence type="ECO:0000250" key="3">
    <source>
        <dbReference type="UniProtKB" id="P00493"/>
    </source>
</evidence>
<evidence type="ECO:0000250" key="4">
    <source>
        <dbReference type="UniProtKB" id="P27605"/>
    </source>
</evidence>
<evidence type="ECO:0000305" key="5"/>
<sequence length="218" mass="24567">MATRSPGVVISDDEPGYDLDLFCIPNHYAEDLERVFIPHGLIMDRTERLARDVMKEMGGHHIVALCVLKGGYKFFADLLDYIKALNRNSDRSIPMTVDFIRLKSYCNDQSTGDTKVIGGDDLSTLTGKNVLIVEDIIDTGKTMQTLLSLVRQYNPKMVKVASLLVKRTPRSVGYKPDFVGFEIPDKFVVGYALDYNEYFRDLNHVCVISETGKAKYKA</sequence>
<dbReference type="EC" id="2.4.2.8" evidence="2"/>
<dbReference type="EMBL" id="AB222109">
    <property type="protein sequence ID" value="BAF62354.1"/>
    <property type="molecule type" value="mRNA"/>
</dbReference>
<dbReference type="RefSeq" id="NP_001104287.1">
    <property type="nucleotide sequence ID" value="NM_001110817.1"/>
</dbReference>
<dbReference type="SMR" id="A5A6I1"/>
<dbReference type="STRING" id="9598.ENSPTRP00000086770"/>
<dbReference type="PaxDb" id="9598-ENSPTRP00000038394"/>
<dbReference type="GeneID" id="735894"/>
<dbReference type="KEGG" id="ptr:735894"/>
<dbReference type="CTD" id="3251"/>
<dbReference type="eggNOG" id="KOG3367">
    <property type="taxonomic scope" value="Eukaryota"/>
</dbReference>
<dbReference type="InParanoid" id="A5A6I1"/>
<dbReference type="UniPathway" id="UPA00591">
    <property type="reaction ID" value="UER00648"/>
</dbReference>
<dbReference type="Proteomes" id="UP000002277">
    <property type="component" value="Unplaced"/>
</dbReference>
<dbReference type="GO" id="GO:0005829">
    <property type="term" value="C:cytosol"/>
    <property type="evidence" value="ECO:0000318"/>
    <property type="project" value="GO_Central"/>
</dbReference>
<dbReference type="GO" id="GO:0052657">
    <property type="term" value="F:guanine phosphoribosyltransferase activity"/>
    <property type="evidence" value="ECO:0000250"/>
    <property type="project" value="UniProtKB"/>
</dbReference>
<dbReference type="GO" id="GO:0004422">
    <property type="term" value="F:hypoxanthine phosphoribosyltransferase activity"/>
    <property type="evidence" value="ECO:0000250"/>
    <property type="project" value="UniProtKB"/>
</dbReference>
<dbReference type="GO" id="GO:0000287">
    <property type="term" value="F:magnesium ion binding"/>
    <property type="evidence" value="ECO:0000318"/>
    <property type="project" value="GO_Central"/>
</dbReference>
<dbReference type="GO" id="GO:0000166">
    <property type="term" value="F:nucleotide binding"/>
    <property type="evidence" value="ECO:0007669"/>
    <property type="project" value="UniProtKB-KW"/>
</dbReference>
<dbReference type="GO" id="GO:0046038">
    <property type="term" value="P:GMP catabolic process"/>
    <property type="evidence" value="ECO:0000250"/>
    <property type="project" value="UniProtKB"/>
</dbReference>
<dbReference type="GO" id="GO:0032263">
    <property type="term" value="P:GMP salvage"/>
    <property type="evidence" value="ECO:0000318"/>
    <property type="project" value="GO_Central"/>
</dbReference>
<dbReference type="GO" id="GO:0006178">
    <property type="term" value="P:guanine salvage"/>
    <property type="evidence" value="ECO:0000250"/>
    <property type="project" value="UniProtKB"/>
</dbReference>
<dbReference type="GO" id="GO:0046100">
    <property type="term" value="P:hypoxanthine metabolic process"/>
    <property type="evidence" value="ECO:0000318"/>
    <property type="project" value="GO_Central"/>
</dbReference>
<dbReference type="GO" id="GO:0043103">
    <property type="term" value="P:hypoxanthine salvage"/>
    <property type="evidence" value="ECO:0000250"/>
    <property type="project" value="UniProtKB"/>
</dbReference>
<dbReference type="GO" id="GO:0046040">
    <property type="term" value="P:IMP metabolic process"/>
    <property type="evidence" value="ECO:0000250"/>
    <property type="project" value="UniProtKB"/>
</dbReference>
<dbReference type="GO" id="GO:0032264">
    <property type="term" value="P:IMP salvage"/>
    <property type="evidence" value="ECO:0000318"/>
    <property type="project" value="GO_Central"/>
</dbReference>
<dbReference type="GO" id="GO:0006166">
    <property type="term" value="P:purine ribonucleoside salvage"/>
    <property type="evidence" value="ECO:0007669"/>
    <property type="project" value="UniProtKB-KW"/>
</dbReference>
<dbReference type="CDD" id="cd06223">
    <property type="entry name" value="PRTases_typeI"/>
    <property type="match status" value="1"/>
</dbReference>
<dbReference type="FunFam" id="3.40.50.2020:FF:000019">
    <property type="entry name" value="Hypoxanthine phosphoribosyltransferase"/>
    <property type="match status" value="1"/>
</dbReference>
<dbReference type="Gene3D" id="3.40.50.2020">
    <property type="match status" value="1"/>
</dbReference>
<dbReference type="InterPro" id="IPR050408">
    <property type="entry name" value="HGPRT"/>
</dbReference>
<dbReference type="InterPro" id="IPR005904">
    <property type="entry name" value="Hxn_phspho_trans"/>
</dbReference>
<dbReference type="InterPro" id="IPR000836">
    <property type="entry name" value="PRibTrfase_dom"/>
</dbReference>
<dbReference type="InterPro" id="IPR029057">
    <property type="entry name" value="PRTase-like"/>
</dbReference>
<dbReference type="NCBIfam" id="TIGR01203">
    <property type="entry name" value="HGPRTase"/>
    <property type="match status" value="1"/>
</dbReference>
<dbReference type="PANTHER" id="PTHR43340">
    <property type="entry name" value="HYPOXANTHINE-GUANINE PHOSPHORIBOSYLTRANSFERASE"/>
    <property type="match status" value="1"/>
</dbReference>
<dbReference type="PANTHER" id="PTHR43340:SF6">
    <property type="entry name" value="HYPOXANTHINE-GUANINE PHOSPHORIBOSYLTRANSFERASE"/>
    <property type="match status" value="1"/>
</dbReference>
<dbReference type="Pfam" id="PF00156">
    <property type="entry name" value="Pribosyltran"/>
    <property type="match status" value="1"/>
</dbReference>
<dbReference type="SUPFAM" id="SSF53271">
    <property type="entry name" value="PRTase-like"/>
    <property type="match status" value="1"/>
</dbReference>
<dbReference type="PROSITE" id="PS00103">
    <property type="entry name" value="PUR_PYR_PR_TRANSFER"/>
    <property type="match status" value="1"/>
</dbReference>
<comment type="function">
    <text evidence="1">Converts guanine to guanosine monophosphate, and hypoxanthine to inosine monophosphate. Transfers the 5-phosphoribosyl group from 5-phosphoribosylpyrophosphate onto the purine. Plays a central role in the generation of purine nucleotides through the purine salvage pathway (By similarity).</text>
</comment>
<comment type="catalytic activity">
    <reaction evidence="2">
        <text>IMP + diphosphate = hypoxanthine + 5-phospho-alpha-D-ribose 1-diphosphate</text>
        <dbReference type="Rhea" id="RHEA:17973"/>
        <dbReference type="ChEBI" id="CHEBI:17368"/>
        <dbReference type="ChEBI" id="CHEBI:33019"/>
        <dbReference type="ChEBI" id="CHEBI:58017"/>
        <dbReference type="ChEBI" id="CHEBI:58053"/>
        <dbReference type="EC" id="2.4.2.8"/>
    </reaction>
    <physiologicalReaction direction="right-to-left" evidence="2">
        <dbReference type="Rhea" id="RHEA:17975"/>
    </physiologicalReaction>
</comment>
<comment type="catalytic activity">
    <reaction evidence="2">
        <text>GMP + diphosphate = guanine + 5-phospho-alpha-D-ribose 1-diphosphate</text>
        <dbReference type="Rhea" id="RHEA:25424"/>
        <dbReference type="ChEBI" id="CHEBI:16235"/>
        <dbReference type="ChEBI" id="CHEBI:33019"/>
        <dbReference type="ChEBI" id="CHEBI:58017"/>
        <dbReference type="ChEBI" id="CHEBI:58115"/>
        <dbReference type="EC" id="2.4.2.8"/>
    </reaction>
    <physiologicalReaction direction="right-to-left" evidence="2">
        <dbReference type="Rhea" id="RHEA:25426"/>
    </physiologicalReaction>
</comment>
<comment type="cofactor">
    <cofactor evidence="1">
        <name>Mg(2+)</name>
        <dbReference type="ChEBI" id="CHEBI:18420"/>
    </cofactor>
    <text evidence="1">Binds 2 magnesium ions per subunit. The magnesium ions are essentially bound to the substrate and have few direct interactions with the protein.</text>
</comment>
<comment type="pathway">
    <text>Purine metabolism; IMP biosynthesis via salvage pathway; IMP from hypoxanthine: step 1/1.</text>
</comment>
<comment type="subunit">
    <text evidence="1">Homotetramer.</text>
</comment>
<comment type="subcellular location">
    <subcellularLocation>
        <location evidence="1">Cytoplasm</location>
    </subcellularLocation>
</comment>
<comment type="similarity">
    <text evidence="5">Belongs to the purine/pyrimidine phosphoribosyltransferase family.</text>
</comment>